<gene>
    <name evidence="1" type="primary">ccmE</name>
    <name evidence="1" type="synonym">cycJ</name>
    <name type="ordered locus">BWG_1970</name>
</gene>
<organism>
    <name type="scientific">Escherichia coli (strain K12 / MC4100 / BW2952)</name>
    <dbReference type="NCBI Taxonomy" id="595496"/>
    <lineage>
        <taxon>Bacteria</taxon>
        <taxon>Pseudomonadati</taxon>
        <taxon>Pseudomonadota</taxon>
        <taxon>Gammaproteobacteria</taxon>
        <taxon>Enterobacterales</taxon>
        <taxon>Enterobacteriaceae</taxon>
        <taxon>Escherichia</taxon>
    </lineage>
</organism>
<keyword id="KW-0997">Cell inner membrane</keyword>
<keyword id="KW-1003">Cell membrane</keyword>
<keyword id="KW-0201">Cytochrome c-type biogenesis</keyword>
<keyword id="KW-0349">Heme</keyword>
<keyword id="KW-0408">Iron</keyword>
<keyword id="KW-0472">Membrane</keyword>
<keyword id="KW-0479">Metal-binding</keyword>
<keyword id="KW-0735">Signal-anchor</keyword>
<keyword id="KW-0812">Transmembrane</keyword>
<keyword id="KW-1133">Transmembrane helix</keyword>
<proteinExistence type="inferred from homology"/>
<dbReference type="EMBL" id="CP001396">
    <property type="protein sequence ID" value="ACR64000.1"/>
    <property type="molecule type" value="Genomic_DNA"/>
</dbReference>
<dbReference type="RefSeq" id="WP_001026418.1">
    <property type="nucleotide sequence ID" value="NC_012759.1"/>
</dbReference>
<dbReference type="SMR" id="C4ZU39"/>
<dbReference type="GeneID" id="86860369"/>
<dbReference type="KEGG" id="ebw:BWG_1970"/>
<dbReference type="HOGENOM" id="CLU_079503_1_0_6"/>
<dbReference type="GO" id="GO:0005886">
    <property type="term" value="C:plasma membrane"/>
    <property type="evidence" value="ECO:0007669"/>
    <property type="project" value="UniProtKB-SubCell"/>
</dbReference>
<dbReference type="GO" id="GO:0020037">
    <property type="term" value="F:heme binding"/>
    <property type="evidence" value="ECO:0007669"/>
    <property type="project" value="InterPro"/>
</dbReference>
<dbReference type="GO" id="GO:0046872">
    <property type="term" value="F:metal ion binding"/>
    <property type="evidence" value="ECO:0007669"/>
    <property type="project" value="UniProtKB-KW"/>
</dbReference>
<dbReference type="GO" id="GO:0017004">
    <property type="term" value="P:cytochrome complex assembly"/>
    <property type="evidence" value="ECO:0007669"/>
    <property type="project" value="UniProtKB-KW"/>
</dbReference>
<dbReference type="FunFam" id="2.40.50.140:FF:000104">
    <property type="entry name" value="Cytochrome c-type biogenesis protein CcmE"/>
    <property type="match status" value="1"/>
</dbReference>
<dbReference type="Gene3D" id="2.40.50.140">
    <property type="entry name" value="Nucleic acid-binding proteins"/>
    <property type="match status" value="1"/>
</dbReference>
<dbReference type="HAMAP" id="MF_01959">
    <property type="entry name" value="CcmE"/>
    <property type="match status" value="1"/>
</dbReference>
<dbReference type="InterPro" id="IPR004329">
    <property type="entry name" value="CcmE"/>
</dbReference>
<dbReference type="InterPro" id="IPR036127">
    <property type="entry name" value="CcmE-like_sf"/>
</dbReference>
<dbReference type="InterPro" id="IPR012340">
    <property type="entry name" value="NA-bd_OB-fold"/>
</dbReference>
<dbReference type="NCBIfam" id="NF009635">
    <property type="entry name" value="PRK13150.1"/>
    <property type="match status" value="1"/>
</dbReference>
<dbReference type="NCBIfam" id="NF009638">
    <property type="entry name" value="PRK13165.1"/>
    <property type="match status" value="1"/>
</dbReference>
<dbReference type="NCBIfam" id="NF009727">
    <property type="entry name" value="PRK13254.1-1"/>
    <property type="match status" value="1"/>
</dbReference>
<dbReference type="NCBIfam" id="NF009729">
    <property type="entry name" value="PRK13254.1-3"/>
    <property type="match status" value="1"/>
</dbReference>
<dbReference type="PANTHER" id="PTHR34128">
    <property type="entry name" value="CYTOCHROME C-TYPE BIOGENESIS PROTEIN CCME HOMOLOG, MITOCHONDRIAL"/>
    <property type="match status" value="1"/>
</dbReference>
<dbReference type="PANTHER" id="PTHR34128:SF2">
    <property type="entry name" value="CYTOCHROME C-TYPE BIOGENESIS PROTEIN CCME HOMOLOG, MITOCHONDRIAL"/>
    <property type="match status" value="1"/>
</dbReference>
<dbReference type="Pfam" id="PF03100">
    <property type="entry name" value="CcmE"/>
    <property type="match status" value="1"/>
</dbReference>
<dbReference type="SUPFAM" id="SSF82093">
    <property type="entry name" value="Heme chaperone CcmE"/>
    <property type="match status" value="1"/>
</dbReference>
<sequence length="159" mass="17698">MNIRRKNRLWIACAVLAGLALTIGLVLYALRSNIDLFYTPGEILYGKRETQQMPEVGQRLRVGGMVMPGSVQRDPNSLKVTFTIYDAEGSVDVSYEGILPDLFREGQGVVVQGELEKGNHILAKEVLAKHDENYTPPEVEKAMEANHRRPASVYKDPAS</sequence>
<evidence type="ECO:0000255" key="1">
    <source>
        <dbReference type="HAMAP-Rule" id="MF_01959"/>
    </source>
</evidence>
<evidence type="ECO:0000256" key="2">
    <source>
        <dbReference type="SAM" id="MobiDB-lite"/>
    </source>
</evidence>
<name>CCME_ECOBW</name>
<protein>
    <recommendedName>
        <fullName evidence="1">Cytochrome c-type biogenesis protein CcmE</fullName>
    </recommendedName>
    <alternativeName>
        <fullName evidence="1">Cytochrome c maturation protein E</fullName>
    </alternativeName>
    <alternativeName>
        <fullName evidence="1">Heme chaperone CcmE</fullName>
    </alternativeName>
</protein>
<feature type="chain" id="PRO_1000216213" description="Cytochrome c-type biogenesis protein CcmE">
    <location>
        <begin position="1"/>
        <end position="159"/>
    </location>
</feature>
<feature type="topological domain" description="Cytoplasmic" evidence="1">
    <location>
        <begin position="1"/>
        <end position="8"/>
    </location>
</feature>
<feature type="transmembrane region" description="Helical; Signal-anchor for type II membrane protein" evidence="1">
    <location>
        <begin position="9"/>
        <end position="29"/>
    </location>
</feature>
<feature type="topological domain" description="Periplasmic" evidence="1">
    <location>
        <begin position="30"/>
        <end position="159"/>
    </location>
</feature>
<feature type="region of interest" description="Disordered" evidence="2">
    <location>
        <begin position="132"/>
        <end position="159"/>
    </location>
</feature>
<feature type="compositionally biased region" description="Basic and acidic residues" evidence="2">
    <location>
        <begin position="132"/>
        <end position="147"/>
    </location>
</feature>
<feature type="binding site" description="covalent" evidence="1">
    <location>
        <position position="130"/>
    </location>
    <ligand>
        <name>heme</name>
        <dbReference type="ChEBI" id="CHEBI:30413"/>
    </ligand>
</feature>
<feature type="binding site" description="axial binding residue" evidence="1">
    <location>
        <position position="134"/>
    </location>
    <ligand>
        <name>heme</name>
        <dbReference type="ChEBI" id="CHEBI:30413"/>
    </ligand>
    <ligandPart>
        <name>Fe</name>
        <dbReference type="ChEBI" id="CHEBI:18248"/>
    </ligandPart>
</feature>
<accession>C4ZU39</accession>
<reference key="1">
    <citation type="journal article" date="2009" name="J. Bacteriol.">
        <title>Genomic sequencing reveals regulatory mutations and recombinational events in the widely used MC4100 lineage of Escherichia coli K-12.</title>
        <authorList>
            <person name="Ferenci T."/>
            <person name="Zhou Z."/>
            <person name="Betteridge T."/>
            <person name="Ren Y."/>
            <person name="Liu Y."/>
            <person name="Feng L."/>
            <person name="Reeves P.R."/>
            <person name="Wang L."/>
        </authorList>
    </citation>
    <scope>NUCLEOTIDE SEQUENCE [LARGE SCALE GENOMIC DNA]</scope>
    <source>
        <strain>K12 / MC4100 / BW2952</strain>
    </source>
</reference>
<comment type="function">
    <text evidence="1">Heme chaperone required for the biogenesis of c-type cytochromes. Transiently binds heme delivered by CcmC and transfers the heme to apo-cytochromes in a process facilitated by CcmF and CcmH.</text>
</comment>
<comment type="subcellular location">
    <subcellularLocation>
        <location evidence="1">Cell inner membrane</location>
        <topology evidence="1">Single-pass type II membrane protein</topology>
        <orientation evidence="1">Periplasmic side</orientation>
    </subcellularLocation>
</comment>
<comment type="similarity">
    <text evidence="1">Belongs to the CcmE/CycJ family.</text>
</comment>